<accession>P22639</accession>
<proteinExistence type="inferred from homology"/>
<comment type="similarity">
    <text evidence="1">Belongs to the glycosyltransferase 2 family.</text>
</comment>
<comment type="sequence caution" evidence="1">
    <conflict type="erroneous initiation">
        <sequence resource="EMBL-CDS" id="AAC32401"/>
    </conflict>
</comment>
<protein>
    <recommendedName>
        <fullName>Uncharacterized glycosyltransferase alr2836</fullName>
        <ecNumber>2.4.-.-</ecNumber>
    </recommendedName>
</protein>
<name>Y2836_NOSS1</name>
<sequence>MKISVIISNYNYARYLSRAINSVLAQTHSDIEIVIVDDGSTDNSRDVITQLQEQAPDKIKPIFQANQGQGGAFNAGFAAATGEVVAFLDADDVWKPHKLQRIVEVFQTSDVVGVMHHLDIIDGNDKTIDQASTQGPKLSEDLASVILQTGNAWCFPPTSGLAYRREVLEKVFPIDPVKWRIWADGCIIYCTAFLGKIKTLQENLAYYRIHGANNHMSAASATSEQEAKSQAGIEMTNQYINDFLVRIGYGARVDLSRNLQYRRTKYYQRSQWDLREVWGISRLILGWPFYSGQERAYYLARFLFKSGKFLLRSDVHTESTTI</sequence>
<feature type="chain" id="PRO_0000059208" description="Uncharacterized glycosyltransferase alr2836">
    <location>
        <begin position="1"/>
        <end position="322"/>
    </location>
</feature>
<organism>
    <name type="scientific">Nostoc sp. (strain PCC 7120 / SAG 25.82 / UTEX 2576)</name>
    <dbReference type="NCBI Taxonomy" id="103690"/>
    <lineage>
        <taxon>Bacteria</taxon>
        <taxon>Bacillati</taxon>
        <taxon>Cyanobacteriota</taxon>
        <taxon>Cyanophyceae</taxon>
        <taxon>Nostocales</taxon>
        <taxon>Nostocaceae</taxon>
        <taxon>Nostoc</taxon>
    </lineage>
</organism>
<keyword id="KW-0328">Glycosyltransferase</keyword>
<keyword id="KW-1185">Reference proteome</keyword>
<keyword id="KW-0808">Transferase</keyword>
<reference key="1">
    <citation type="journal article" date="2001" name="DNA Res.">
        <title>Complete genomic sequence of the filamentous nitrogen-fixing cyanobacterium Anabaena sp. strain PCC 7120.</title>
        <authorList>
            <person name="Kaneko T."/>
            <person name="Nakamura Y."/>
            <person name="Wolk C.P."/>
            <person name="Kuritz T."/>
            <person name="Sasamoto S."/>
            <person name="Watanabe A."/>
            <person name="Iriguchi M."/>
            <person name="Ishikawa A."/>
            <person name="Kawashima K."/>
            <person name="Kimura T."/>
            <person name="Kishida Y."/>
            <person name="Kohara M."/>
            <person name="Matsumoto M."/>
            <person name="Matsuno A."/>
            <person name="Muraki A."/>
            <person name="Nakazaki N."/>
            <person name="Shimpo S."/>
            <person name="Sugimoto M."/>
            <person name="Takazawa M."/>
            <person name="Yamada M."/>
            <person name="Yasuda M."/>
            <person name="Tabata S."/>
        </authorList>
    </citation>
    <scope>NUCLEOTIDE SEQUENCE [LARGE SCALE GENOMIC DNA]</scope>
    <source>
        <strain>PCC 7120 / SAG 25.82 / UTEX 2576</strain>
    </source>
</reference>
<reference key="2">
    <citation type="journal article" date="1990" name="J. Bacteriol.">
        <title>Identification and characterization of hetA, a gene that acts early in the process of morphological differentiation of heterocysts.</title>
        <authorList>
            <person name="Holland D."/>
            <person name="Wolk C.P."/>
        </authorList>
    </citation>
    <scope>NUCLEOTIDE SEQUENCE [GENOMIC DNA] OF 1-131</scope>
</reference>
<gene>
    <name type="ordered locus">alr2836</name>
</gene>
<evidence type="ECO:0000305" key="1"/>
<dbReference type="EC" id="2.4.-.-"/>
<dbReference type="EMBL" id="BA000019">
    <property type="protein sequence ID" value="BAB74535.1"/>
    <property type="molecule type" value="Genomic_DNA"/>
</dbReference>
<dbReference type="EMBL" id="AF031959">
    <property type="protein sequence ID" value="AAC32401.1"/>
    <property type="status" value="ALT_INIT"/>
    <property type="molecule type" value="Genomic_DNA"/>
</dbReference>
<dbReference type="PIR" id="AE2160">
    <property type="entry name" value="AE2160"/>
</dbReference>
<dbReference type="PIR" id="B35391">
    <property type="entry name" value="B35391"/>
</dbReference>
<dbReference type="RefSeq" id="WP_010996987.1">
    <property type="nucleotide sequence ID" value="NZ_RSCN01000003.1"/>
</dbReference>
<dbReference type="SMR" id="P22639"/>
<dbReference type="STRING" id="103690.gene:10494870"/>
<dbReference type="CAZy" id="GT2">
    <property type="family name" value="Glycosyltransferase Family 2"/>
</dbReference>
<dbReference type="KEGG" id="ana:alr2836"/>
<dbReference type="eggNOG" id="COG1215">
    <property type="taxonomic scope" value="Bacteria"/>
</dbReference>
<dbReference type="OrthoDB" id="450387at2"/>
<dbReference type="Proteomes" id="UP000002483">
    <property type="component" value="Chromosome"/>
</dbReference>
<dbReference type="GO" id="GO:0016758">
    <property type="term" value="F:hexosyltransferase activity"/>
    <property type="evidence" value="ECO:0007669"/>
    <property type="project" value="UniProtKB-ARBA"/>
</dbReference>
<dbReference type="GO" id="GO:0009058">
    <property type="term" value="P:biosynthetic process"/>
    <property type="evidence" value="ECO:0007669"/>
    <property type="project" value="UniProtKB-ARBA"/>
</dbReference>
<dbReference type="Gene3D" id="3.90.550.10">
    <property type="entry name" value="Spore Coat Polysaccharide Biosynthesis Protein SpsA, Chain A"/>
    <property type="match status" value="1"/>
</dbReference>
<dbReference type="InterPro" id="IPR001173">
    <property type="entry name" value="Glyco_trans_2-like"/>
</dbReference>
<dbReference type="InterPro" id="IPR029044">
    <property type="entry name" value="Nucleotide-diphossugar_trans"/>
</dbReference>
<dbReference type="PANTHER" id="PTHR22916">
    <property type="entry name" value="GLYCOSYLTRANSFERASE"/>
    <property type="match status" value="1"/>
</dbReference>
<dbReference type="PANTHER" id="PTHR22916:SF3">
    <property type="entry name" value="UDP-GLCNAC:BETAGAL BETA-1,3-N-ACETYLGLUCOSAMINYLTRANSFERASE-LIKE PROTEIN 1"/>
    <property type="match status" value="1"/>
</dbReference>
<dbReference type="Pfam" id="PF00535">
    <property type="entry name" value="Glycos_transf_2"/>
    <property type="match status" value="1"/>
</dbReference>
<dbReference type="SUPFAM" id="SSF53448">
    <property type="entry name" value="Nucleotide-diphospho-sugar transferases"/>
    <property type="match status" value="1"/>
</dbReference>